<feature type="chain" id="PRO_0000066802" description="Toxin To35">
    <location>
        <begin position="1"/>
        <end position="10" status="greater than"/>
    </location>
</feature>
<feature type="non-terminal residue" evidence="2">
    <location>
        <position position="10"/>
    </location>
</feature>
<name>SC35_TITOB</name>
<evidence type="ECO:0000269" key="1">
    <source>
    </source>
</evidence>
<evidence type="ECO:0000303" key="2">
    <source>
    </source>
</evidence>
<evidence type="ECO:0000305" key="3"/>
<proteinExistence type="evidence at protein level"/>
<dbReference type="GO" id="GO:0005576">
    <property type="term" value="C:extracellular region"/>
    <property type="evidence" value="ECO:0007005"/>
    <property type="project" value="UniProtKB"/>
</dbReference>
<dbReference type="GO" id="GO:0090729">
    <property type="term" value="F:toxin activity"/>
    <property type="evidence" value="ECO:0007669"/>
    <property type="project" value="UniProtKB-KW"/>
</dbReference>
<protein>
    <recommendedName>
        <fullName>Toxin To35</fullName>
    </recommendedName>
    <alternativeName>
        <fullName>Toxin Tc35</fullName>
    </alternativeName>
</protein>
<accession>P84680</accession>
<reference evidence="3" key="1">
    <citation type="journal article" date="2004" name="J. Chromatogr. B">
        <title>Proteomics of the venom from the Amazonian scorpion Tityus cambridgei and the role of prolines on mass spectrometry analysis of toxins.</title>
        <authorList>
            <person name="Batista C.V.F."/>
            <person name="del Pozo L."/>
            <person name="Zamudio F.Z."/>
            <person name="Contreras S."/>
            <person name="Becerril B."/>
            <person name="Wanke E."/>
            <person name="Possani L.D."/>
        </authorList>
    </citation>
    <scope>PROTEIN SEQUENCE</scope>
    <scope>SUBCELLULAR LOCATION</scope>
    <scope>TISSUE SPECIFICITY</scope>
    <scope>MASS SPECTROMETRY</scope>
    <source>
        <tissue evidence="1">Venom</tissue>
    </source>
</reference>
<comment type="subcellular location">
    <subcellularLocation>
        <location evidence="1">Secreted</location>
    </subcellularLocation>
</comment>
<comment type="tissue specificity">
    <text evidence="1">Expressed by the venom gland.</text>
</comment>
<comment type="mass spectrometry"/>
<organism>
    <name type="scientific">Tityus obscurus</name>
    <name type="common">Amazonian scorpion</name>
    <name type="synonym">Tityus cambridgei</name>
    <dbReference type="NCBI Taxonomy" id="1221240"/>
    <lineage>
        <taxon>Eukaryota</taxon>
        <taxon>Metazoa</taxon>
        <taxon>Ecdysozoa</taxon>
        <taxon>Arthropoda</taxon>
        <taxon>Chelicerata</taxon>
        <taxon>Arachnida</taxon>
        <taxon>Scorpiones</taxon>
        <taxon>Buthida</taxon>
        <taxon>Buthoidea</taxon>
        <taxon>Buthidae</taxon>
        <taxon>Tityus</taxon>
    </lineage>
</organism>
<keyword id="KW-0903">Direct protein sequencing</keyword>
<keyword id="KW-0964">Secreted</keyword>
<keyword id="KW-0800">Toxin</keyword>
<sequence>TGPQTXXQAA</sequence>